<gene>
    <name evidence="1" type="primary">erpA</name>
    <name type="ordered locus">SPA0210</name>
</gene>
<accession>Q5PD49</accession>
<protein>
    <recommendedName>
        <fullName evidence="1">Iron-sulfur cluster insertion protein ErpA</fullName>
    </recommendedName>
</protein>
<organism>
    <name type="scientific">Salmonella paratyphi A (strain ATCC 9150 / SARB42)</name>
    <dbReference type="NCBI Taxonomy" id="295319"/>
    <lineage>
        <taxon>Bacteria</taxon>
        <taxon>Pseudomonadati</taxon>
        <taxon>Pseudomonadota</taxon>
        <taxon>Gammaproteobacteria</taxon>
        <taxon>Enterobacterales</taxon>
        <taxon>Enterobacteriaceae</taxon>
        <taxon>Salmonella</taxon>
    </lineage>
</organism>
<comment type="function">
    <text evidence="1">Required for insertion of 4Fe-4S clusters for at least IspG.</text>
</comment>
<comment type="cofactor">
    <cofactor evidence="1">
        <name>iron-sulfur cluster</name>
        <dbReference type="ChEBI" id="CHEBI:30408"/>
    </cofactor>
    <text evidence="1">Binds 1 iron-sulfur cluster per subunit.</text>
</comment>
<comment type="subunit">
    <text evidence="1">Homodimer.</text>
</comment>
<comment type="similarity">
    <text evidence="1">Belongs to the HesB/IscA family.</text>
</comment>
<comment type="sequence caution" evidence="2">
    <conflict type="erroneous initiation">
        <sequence resource="EMBL-CDS" id="AAV76240"/>
    </conflict>
</comment>
<name>ERPA_SALPA</name>
<dbReference type="EMBL" id="CP000026">
    <property type="protein sequence ID" value="AAV76240.1"/>
    <property type="status" value="ALT_INIT"/>
    <property type="molecule type" value="Genomic_DNA"/>
</dbReference>
<dbReference type="RefSeq" id="WP_001278668.1">
    <property type="nucleotide sequence ID" value="NC_006511.1"/>
</dbReference>
<dbReference type="SMR" id="Q5PD49"/>
<dbReference type="GeneID" id="66754727"/>
<dbReference type="KEGG" id="spt:SPA0210"/>
<dbReference type="HOGENOM" id="CLU_069054_5_3_6"/>
<dbReference type="Proteomes" id="UP000008185">
    <property type="component" value="Chromosome"/>
</dbReference>
<dbReference type="GO" id="GO:0005829">
    <property type="term" value="C:cytosol"/>
    <property type="evidence" value="ECO:0007669"/>
    <property type="project" value="TreeGrafter"/>
</dbReference>
<dbReference type="GO" id="GO:0051537">
    <property type="term" value="F:2 iron, 2 sulfur cluster binding"/>
    <property type="evidence" value="ECO:0007669"/>
    <property type="project" value="TreeGrafter"/>
</dbReference>
<dbReference type="GO" id="GO:0051539">
    <property type="term" value="F:4 iron, 4 sulfur cluster binding"/>
    <property type="evidence" value="ECO:0007669"/>
    <property type="project" value="TreeGrafter"/>
</dbReference>
<dbReference type="GO" id="GO:0005506">
    <property type="term" value="F:iron ion binding"/>
    <property type="evidence" value="ECO:0007669"/>
    <property type="project" value="UniProtKB-UniRule"/>
</dbReference>
<dbReference type="GO" id="GO:0016226">
    <property type="term" value="P:iron-sulfur cluster assembly"/>
    <property type="evidence" value="ECO:0007669"/>
    <property type="project" value="UniProtKB-UniRule"/>
</dbReference>
<dbReference type="FunFam" id="2.60.300.12:FF:000002">
    <property type="entry name" value="Iron-sulfur cluster insertion protein ErpA"/>
    <property type="match status" value="1"/>
</dbReference>
<dbReference type="Gene3D" id="2.60.300.12">
    <property type="entry name" value="HesB-like domain"/>
    <property type="match status" value="1"/>
</dbReference>
<dbReference type="HAMAP" id="MF_01380">
    <property type="entry name" value="Fe_S_insert_ErpA"/>
    <property type="match status" value="1"/>
</dbReference>
<dbReference type="InterPro" id="IPR000361">
    <property type="entry name" value="FeS_biogenesis"/>
</dbReference>
<dbReference type="InterPro" id="IPR016092">
    <property type="entry name" value="FeS_cluster_insertion"/>
</dbReference>
<dbReference type="InterPro" id="IPR017870">
    <property type="entry name" value="FeS_cluster_insertion_CS"/>
</dbReference>
<dbReference type="InterPro" id="IPR023063">
    <property type="entry name" value="FeS_cluster_insertion_RrpA"/>
</dbReference>
<dbReference type="InterPro" id="IPR035903">
    <property type="entry name" value="HesB-like_dom_sf"/>
</dbReference>
<dbReference type="NCBIfam" id="TIGR00049">
    <property type="entry name" value="iron-sulfur cluster assembly accessory protein"/>
    <property type="match status" value="1"/>
</dbReference>
<dbReference type="NCBIfam" id="NF010147">
    <property type="entry name" value="PRK13623.1"/>
    <property type="match status" value="1"/>
</dbReference>
<dbReference type="PANTHER" id="PTHR43011">
    <property type="entry name" value="IRON-SULFUR CLUSTER ASSEMBLY 2 HOMOLOG, MITOCHONDRIAL"/>
    <property type="match status" value="1"/>
</dbReference>
<dbReference type="PANTHER" id="PTHR43011:SF1">
    <property type="entry name" value="IRON-SULFUR CLUSTER ASSEMBLY 2 HOMOLOG, MITOCHONDRIAL"/>
    <property type="match status" value="1"/>
</dbReference>
<dbReference type="Pfam" id="PF01521">
    <property type="entry name" value="Fe-S_biosyn"/>
    <property type="match status" value="1"/>
</dbReference>
<dbReference type="SUPFAM" id="SSF89360">
    <property type="entry name" value="HesB-like domain"/>
    <property type="match status" value="1"/>
</dbReference>
<dbReference type="PROSITE" id="PS01152">
    <property type="entry name" value="HESB"/>
    <property type="match status" value="1"/>
</dbReference>
<proteinExistence type="inferred from homology"/>
<keyword id="KW-0408">Iron</keyword>
<keyword id="KW-0411">Iron-sulfur</keyword>
<keyword id="KW-0479">Metal-binding</keyword>
<feature type="chain" id="PRO_0000311544" description="Iron-sulfur cluster insertion protein ErpA">
    <location>
        <begin position="1"/>
        <end position="114"/>
    </location>
</feature>
<feature type="binding site" evidence="1">
    <location>
        <position position="42"/>
    </location>
    <ligand>
        <name>iron-sulfur cluster</name>
        <dbReference type="ChEBI" id="CHEBI:30408"/>
    </ligand>
</feature>
<feature type="binding site" evidence="1">
    <location>
        <position position="106"/>
    </location>
    <ligand>
        <name>iron-sulfur cluster</name>
        <dbReference type="ChEBI" id="CHEBI:30408"/>
    </ligand>
</feature>
<feature type="binding site" evidence="1">
    <location>
        <position position="108"/>
    </location>
    <ligand>
        <name>iron-sulfur cluster</name>
        <dbReference type="ChEBI" id="CHEBI:30408"/>
    </ligand>
</feature>
<sequence>MSDDVALPLQFTDAAANKVKSLIADEDNPNLKLRVYITGGGCSGFQYGFTFDDQVNEGDMTIEKQGVGLVVDPMSLQYLVGGSVDYTEGLEGSRFIVTNPNAKSTCGCGSSFSI</sequence>
<reference key="1">
    <citation type="journal article" date="2004" name="Nat. Genet.">
        <title>Comparison of genome degradation in Paratyphi A and Typhi, human-restricted serovars of Salmonella enterica that cause typhoid.</title>
        <authorList>
            <person name="McClelland M."/>
            <person name="Sanderson K.E."/>
            <person name="Clifton S.W."/>
            <person name="Latreille P."/>
            <person name="Porwollik S."/>
            <person name="Sabo A."/>
            <person name="Meyer R."/>
            <person name="Bieri T."/>
            <person name="Ozersky P."/>
            <person name="McLellan M."/>
            <person name="Harkins C.R."/>
            <person name="Wang C."/>
            <person name="Nguyen C."/>
            <person name="Berghoff A."/>
            <person name="Elliott G."/>
            <person name="Kohlberg S."/>
            <person name="Strong C."/>
            <person name="Du F."/>
            <person name="Carter J."/>
            <person name="Kremizki C."/>
            <person name="Layman D."/>
            <person name="Leonard S."/>
            <person name="Sun H."/>
            <person name="Fulton L."/>
            <person name="Nash W."/>
            <person name="Miner T."/>
            <person name="Minx P."/>
            <person name="Delehaunty K."/>
            <person name="Fronick C."/>
            <person name="Magrini V."/>
            <person name="Nhan M."/>
            <person name="Warren W."/>
            <person name="Florea L."/>
            <person name="Spieth J."/>
            <person name="Wilson R.K."/>
        </authorList>
    </citation>
    <scope>NUCLEOTIDE SEQUENCE [LARGE SCALE GENOMIC DNA]</scope>
    <source>
        <strain>ATCC 9150 / SARB42</strain>
    </source>
</reference>
<evidence type="ECO:0000255" key="1">
    <source>
        <dbReference type="HAMAP-Rule" id="MF_01380"/>
    </source>
</evidence>
<evidence type="ECO:0000305" key="2"/>